<name>GLD2_BOVIN</name>
<sequence>MFPNSILGRPPFTPNHQQHNNFFALSPSLYSHQQLIDAQFSFHNADLSRAVSLQQLTYGNVSPIQTSTSPLFRGRKRLSDEKNLPLDGKRQRFHSPHQEPTIVNHIVPLSDERRYSMSPLFHTHYVPDIVRCVPPFREISILEPREITLPEAKDKLSQQILELFEACQQQVSDLKKKELCRTELQREIQLLFPQSRLFLVGSSLNGFGTRSSDGDLCLVVKEEPCFFQVNQKTEARHILTLVHKHFCTRLSGYIERPQLIRAKVPIVKFRDKVSCVEFDLNVNNIVGIRNTFLLRTYAYLENRVRPLVLVIKKWASHHDINDASRGTLSSYSLVLMVLHYLQTLPEPILPSIQKIYPESFSPSIQLHLVHQAPCNVPPYLSKNESNLGDLLLGFLKYYATEFDWNSQMISVREAKAIPRPDGIEWRNKYICVEEPFDGTNTARAVHEKQKFDMIKDQFLKSWHRLKNRKDLNSILPLRAAILKR</sequence>
<organism>
    <name type="scientific">Bos taurus</name>
    <name type="common">Bovine</name>
    <dbReference type="NCBI Taxonomy" id="9913"/>
    <lineage>
        <taxon>Eukaryota</taxon>
        <taxon>Metazoa</taxon>
        <taxon>Chordata</taxon>
        <taxon>Craniata</taxon>
        <taxon>Vertebrata</taxon>
        <taxon>Euteleostomi</taxon>
        <taxon>Mammalia</taxon>
        <taxon>Eutheria</taxon>
        <taxon>Laurasiatheria</taxon>
        <taxon>Artiodactyla</taxon>
        <taxon>Ruminantia</taxon>
        <taxon>Pecora</taxon>
        <taxon>Bovidae</taxon>
        <taxon>Bovinae</taxon>
        <taxon>Bos</taxon>
    </lineage>
</organism>
<proteinExistence type="evidence at transcript level"/>
<evidence type="ECO:0000250" key="1">
    <source>
        <dbReference type="UniProtKB" id="O13833"/>
    </source>
</evidence>
<evidence type="ECO:0000250" key="2">
    <source>
        <dbReference type="UniProtKB" id="Q6PIY7"/>
    </source>
</evidence>
<evidence type="ECO:0000250" key="3">
    <source>
        <dbReference type="UniProtKB" id="Q91YI6"/>
    </source>
</evidence>
<evidence type="ECO:0000255" key="4"/>
<evidence type="ECO:0000303" key="5">
    <source>
    </source>
</evidence>
<evidence type="ECO:0000305" key="6"/>
<gene>
    <name evidence="2" type="primary">TENT2</name>
</gene>
<accession>Q2HJ44</accession>
<accession>Q1JPF9</accession>
<comment type="function">
    <text evidence="2">Cytoplasmic poly(A) RNA polymerase that adds successive AMP monomers to the 3'-end of specific RNAs, forming a poly(A) tail. In contrast to the canonical nuclear poly(A) RNA polymerase, it only adds poly(A) to selected cytoplasmic mRNAs. Does not play a role in replication-dependent histone mRNA degradation. Adds a single nucleotide to the 3' end of specific miRNAs, monoadenylation stabilizes and prolongs the activity of some but not all miRNAs.</text>
</comment>
<comment type="catalytic activity">
    <reaction evidence="2">
        <text>RNA(n) + ATP = RNA(n)-3'-adenine ribonucleotide + diphosphate</text>
        <dbReference type="Rhea" id="RHEA:11332"/>
        <dbReference type="Rhea" id="RHEA-COMP:14527"/>
        <dbReference type="Rhea" id="RHEA-COMP:17347"/>
        <dbReference type="ChEBI" id="CHEBI:30616"/>
        <dbReference type="ChEBI" id="CHEBI:33019"/>
        <dbReference type="ChEBI" id="CHEBI:140395"/>
        <dbReference type="ChEBI" id="CHEBI:173115"/>
        <dbReference type="EC" id="2.7.7.19"/>
    </reaction>
</comment>
<comment type="cofactor">
    <cofactor evidence="1">
        <name>Mg(2+)</name>
        <dbReference type="ChEBI" id="CHEBI:18420"/>
    </cofactor>
    <cofactor evidence="1">
        <name>Mn(2+)</name>
        <dbReference type="ChEBI" id="CHEBI:29035"/>
    </cofactor>
</comment>
<comment type="subunit">
    <text evidence="2 3">Interacts with CPEB1, CPEB2, CPSF1 and PABPC1 (By similarity). Interacts with QKI isoform QKI7; promoting recruitment to miRNA miR-122 and miR-122 stabilization (By similarity).</text>
</comment>
<comment type="subcellular location">
    <subcellularLocation>
        <location evidence="3">Cytoplasm</location>
    </subcellularLocation>
    <subcellularLocation>
        <location evidence="3">Nucleus</location>
    </subcellularLocation>
</comment>
<comment type="alternative products">
    <event type="alternative splicing"/>
    <isoform>
        <id>Q2HJ44-1</id>
        <name>1</name>
        <sequence type="displayed"/>
    </isoform>
    <isoform>
        <id>Q2HJ44-2</id>
        <name>2</name>
        <sequence type="described" ref="VSP_034322 VSP_034323"/>
    </isoform>
</comment>
<comment type="similarity">
    <text evidence="6">Belongs to the DNA polymerase type-B-like family. GLD2 subfamily.</text>
</comment>
<keyword id="KW-0025">Alternative splicing</keyword>
<keyword id="KW-0067">ATP-binding</keyword>
<keyword id="KW-0963">Cytoplasm</keyword>
<keyword id="KW-0460">Magnesium</keyword>
<keyword id="KW-0464">Manganese</keyword>
<keyword id="KW-0479">Metal-binding</keyword>
<keyword id="KW-0507">mRNA processing</keyword>
<keyword id="KW-0547">Nucleotide-binding</keyword>
<keyword id="KW-0539">Nucleus</keyword>
<keyword id="KW-0597">Phosphoprotein</keyword>
<keyword id="KW-1185">Reference proteome</keyword>
<keyword id="KW-0808">Transferase</keyword>
<protein>
    <recommendedName>
        <fullName evidence="2">Poly(A) RNA polymerase GLD2</fullName>
        <ecNumber evidence="2">2.7.7.19</ecNumber>
    </recommendedName>
    <alternativeName>
        <fullName evidence="2">PAP-associated domain-containing protein 4</fullName>
    </alternativeName>
</protein>
<feature type="chain" id="PRO_0000341548" description="Poly(A) RNA polymerase GLD2">
    <location>
        <begin position="1"/>
        <end position="484"/>
    </location>
</feature>
<feature type="domain" description="PAP-associated">
    <location>
        <begin position="386"/>
        <end position="440"/>
    </location>
</feature>
<feature type="short sequence motif" description="Nuclear localization signal" evidence="4">
    <location>
        <begin position="76"/>
        <end position="92"/>
    </location>
</feature>
<feature type="binding site" evidence="1">
    <location>
        <position position="213"/>
    </location>
    <ligand>
        <name>Mg(2+)</name>
        <dbReference type="ChEBI" id="CHEBI:18420"/>
        <note>catalytic</note>
    </ligand>
</feature>
<feature type="binding site" evidence="1">
    <location>
        <position position="215"/>
    </location>
    <ligand>
        <name>Mg(2+)</name>
        <dbReference type="ChEBI" id="CHEBI:18420"/>
        <note>catalytic</note>
    </ligand>
</feature>
<feature type="modified residue" description="Phosphoserine" evidence="2">
    <location>
        <position position="62"/>
    </location>
</feature>
<feature type="modified residue" description="Phosphoserine" evidence="2">
    <location>
        <position position="69"/>
    </location>
</feature>
<feature type="modified residue" description="Phosphoserine" evidence="2">
    <location>
        <position position="95"/>
    </location>
</feature>
<feature type="splice variant" id="VSP_034322" description="In isoform 2." evidence="5">
    <original>SQQILEL</original>
    <variation>NKRTLTW</variation>
    <location>
        <begin position="157"/>
        <end position="163"/>
    </location>
</feature>
<feature type="splice variant" id="VSP_034323" description="In isoform 2." evidence="5">
    <location>
        <begin position="164"/>
        <end position="484"/>
    </location>
</feature>
<reference key="1">
    <citation type="journal article" date="2005" name="BMC Genomics">
        <title>Characterization of 954 bovine full-CDS cDNA sequences.</title>
        <authorList>
            <person name="Harhay G.P."/>
            <person name="Sonstegard T.S."/>
            <person name="Keele J.W."/>
            <person name="Heaton M.P."/>
            <person name="Clawson M.L."/>
            <person name="Snelling W.M."/>
            <person name="Wiedmann R.T."/>
            <person name="Van Tassell C.P."/>
            <person name="Smith T.P.L."/>
        </authorList>
    </citation>
    <scope>NUCLEOTIDE SEQUENCE [LARGE SCALE MRNA] (ISOFORM 2)</scope>
</reference>
<reference key="2">
    <citation type="submission" date="2006-02" db="EMBL/GenBank/DDBJ databases">
        <authorList>
            <consortium name="NIH - Mammalian Gene Collection (MGC) project"/>
        </authorList>
    </citation>
    <scope>NUCLEOTIDE SEQUENCE [LARGE SCALE MRNA] (ISOFORM 1)</scope>
    <source>
        <strain>Hereford</strain>
        <tissue>Uterus</tissue>
    </source>
</reference>
<dbReference type="EC" id="2.7.7.19" evidence="2"/>
<dbReference type="EMBL" id="BT025394">
    <property type="protein sequence ID" value="ABF57350.1"/>
    <property type="molecule type" value="mRNA"/>
</dbReference>
<dbReference type="EMBL" id="BC113319">
    <property type="protein sequence ID" value="AAI13320.1"/>
    <property type="molecule type" value="mRNA"/>
</dbReference>
<dbReference type="RefSeq" id="NP_001039826.1">
    <molecule id="Q2HJ44-1"/>
    <property type="nucleotide sequence ID" value="NM_001046361.1"/>
</dbReference>
<dbReference type="RefSeq" id="XP_005211397.1">
    <property type="nucleotide sequence ID" value="XM_005211340.2"/>
</dbReference>
<dbReference type="RefSeq" id="XP_005211398.1">
    <molecule id="Q2HJ44-1"/>
    <property type="nucleotide sequence ID" value="XM_005211341.5"/>
</dbReference>
<dbReference type="RefSeq" id="XP_005211399.1">
    <property type="nucleotide sequence ID" value="XM_005211342.3"/>
</dbReference>
<dbReference type="RefSeq" id="XP_015328524.1">
    <property type="nucleotide sequence ID" value="XM_015473038.1"/>
</dbReference>
<dbReference type="SMR" id="Q2HJ44"/>
<dbReference type="FunCoup" id="Q2HJ44">
    <property type="interactions" value="3493"/>
</dbReference>
<dbReference type="STRING" id="9913.ENSBTAP00000065637"/>
<dbReference type="PaxDb" id="9913-ENSBTAP00000008885"/>
<dbReference type="Ensembl" id="ENSBTAT00000008885.6">
    <molecule id="Q2HJ44-1"/>
    <property type="protein sequence ID" value="ENSBTAP00000008885.5"/>
    <property type="gene ID" value="ENSBTAG00000006751.7"/>
</dbReference>
<dbReference type="GeneID" id="533862"/>
<dbReference type="KEGG" id="bta:533862"/>
<dbReference type="CTD" id="167153"/>
<dbReference type="VEuPathDB" id="HostDB:ENSBTAG00000006751"/>
<dbReference type="eggNOG" id="KOG2277">
    <property type="taxonomic scope" value="Eukaryota"/>
</dbReference>
<dbReference type="GeneTree" id="ENSGT00940000156640"/>
<dbReference type="HOGENOM" id="CLU_046147_0_0_1"/>
<dbReference type="InParanoid" id="Q2HJ44"/>
<dbReference type="OMA" id="RTYAYAD"/>
<dbReference type="TreeFam" id="TF315661"/>
<dbReference type="Proteomes" id="UP000009136">
    <property type="component" value="Chromosome 10"/>
</dbReference>
<dbReference type="Bgee" id="ENSBTAG00000006751">
    <property type="expression patterns" value="Expressed in neutrophil and 110 other cell types or tissues"/>
</dbReference>
<dbReference type="GO" id="GO:0005737">
    <property type="term" value="C:cytoplasm"/>
    <property type="evidence" value="ECO:0007669"/>
    <property type="project" value="UniProtKB-SubCell"/>
</dbReference>
<dbReference type="GO" id="GO:0005634">
    <property type="term" value="C:nucleus"/>
    <property type="evidence" value="ECO:0007669"/>
    <property type="project" value="UniProtKB-SubCell"/>
</dbReference>
<dbReference type="GO" id="GO:0005524">
    <property type="term" value="F:ATP binding"/>
    <property type="evidence" value="ECO:0007669"/>
    <property type="project" value="UniProtKB-KW"/>
</dbReference>
<dbReference type="GO" id="GO:0046872">
    <property type="term" value="F:metal ion binding"/>
    <property type="evidence" value="ECO:0007669"/>
    <property type="project" value="UniProtKB-KW"/>
</dbReference>
<dbReference type="GO" id="GO:1990817">
    <property type="term" value="F:poly(A) RNA polymerase activity"/>
    <property type="evidence" value="ECO:0000250"/>
    <property type="project" value="UniProtKB"/>
</dbReference>
<dbReference type="GO" id="GO:0002244">
    <property type="term" value="P:hematopoietic progenitor cell differentiation"/>
    <property type="evidence" value="ECO:0007669"/>
    <property type="project" value="Ensembl"/>
</dbReference>
<dbReference type="GO" id="GO:0071044">
    <property type="term" value="P:histone mRNA catabolic process"/>
    <property type="evidence" value="ECO:0000250"/>
    <property type="project" value="UniProtKB"/>
</dbReference>
<dbReference type="GO" id="GO:0031124">
    <property type="term" value="P:mRNA 3'-end processing"/>
    <property type="evidence" value="ECO:0000250"/>
    <property type="project" value="UniProtKB"/>
</dbReference>
<dbReference type="GO" id="GO:2000626">
    <property type="term" value="P:negative regulation of miRNA catabolic process"/>
    <property type="evidence" value="ECO:0000250"/>
    <property type="project" value="UniProtKB"/>
</dbReference>
<dbReference type="GO" id="GO:0031123">
    <property type="term" value="P:RNA 3'-end processing"/>
    <property type="evidence" value="ECO:0000318"/>
    <property type="project" value="GO_Central"/>
</dbReference>
<dbReference type="GO" id="GO:0140958">
    <property type="term" value="P:target-directed miRNA degradation"/>
    <property type="evidence" value="ECO:0007669"/>
    <property type="project" value="Ensembl"/>
</dbReference>
<dbReference type="CDD" id="cd05402">
    <property type="entry name" value="NT_PAP_TUTase"/>
    <property type="match status" value="1"/>
</dbReference>
<dbReference type="FunFam" id="1.10.1410.10:FF:000007">
    <property type="entry name" value="poly(A) RNA polymerase GLD2 isoform X1"/>
    <property type="match status" value="1"/>
</dbReference>
<dbReference type="FunFam" id="3.30.460.10:FF:000022">
    <property type="entry name" value="poly(A) RNA polymerase GLD2 isoform X1"/>
    <property type="match status" value="1"/>
</dbReference>
<dbReference type="Gene3D" id="1.10.1410.10">
    <property type="match status" value="1"/>
</dbReference>
<dbReference type="Gene3D" id="3.30.460.10">
    <property type="entry name" value="Beta Polymerase, domain 2"/>
    <property type="match status" value="1"/>
</dbReference>
<dbReference type="InterPro" id="IPR054708">
    <property type="entry name" value="MTPAP-like_central"/>
</dbReference>
<dbReference type="InterPro" id="IPR043519">
    <property type="entry name" value="NT_sf"/>
</dbReference>
<dbReference type="InterPro" id="IPR002058">
    <property type="entry name" value="PAP_assoc"/>
</dbReference>
<dbReference type="PANTHER" id="PTHR12271">
    <property type="entry name" value="POLY A POLYMERASE CID PAP -RELATED"/>
    <property type="match status" value="1"/>
</dbReference>
<dbReference type="PANTHER" id="PTHR12271:SF40">
    <property type="entry name" value="POLY(A) RNA POLYMERASE GLD2"/>
    <property type="match status" value="1"/>
</dbReference>
<dbReference type="Pfam" id="PF22600">
    <property type="entry name" value="MTPAP-like_central"/>
    <property type="match status" value="1"/>
</dbReference>
<dbReference type="Pfam" id="PF03828">
    <property type="entry name" value="PAP_assoc"/>
    <property type="match status" value="1"/>
</dbReference>
<dbReference type="SUPFAM" id="SSF81301">
    <property type="entry name" value="Nucleotidyltransferase"/>
    <property type="match status" value="1"/>
</dbReference>
<dbReference type="SUPFAM" id="SSF81631">
    <property type="entry name" value="PAP/OAS1 substrate-binding domain"/>
    <property type="match status" value="1"/>
</dbReference>